<proteinExistence type="inferred from homology"/>
<protein>
    <recommendedName>
        <fullName evidence="1">Adenylate kinase</fullName>
        <shortName evidence="1">AK</shortName>
        <ecNumber evidence="1">2.7.4.3</ecNumber>
    </recommendedName>
    <alternativeName>
        <fullName evidence="1">ATP-AMP transphosphorylase</fullName>
    </alternativeName>
    <alternativeName>
        <fullName evidence="1">ATP:AMP phosphotransferase</fullName>
    </alternativeName>
    <alternativeName>
        <fullName evidence="1">Adenylate monophosphate kinase</fullName>
    </alternativeName>
</protein>
<gene>
    <name evidence="1" type="primary">adk</name>
    <name type="ordered locus">Strop_3902</name>
</gene>
<reference key="1">
    <citation type="journal article" date="2007" name="Proc. Natl. Acad. Sci. U.S.A.">
        <title>Genome sequencing reveals complex secondary metabolome in the marine actinomycete Salinispora tropica.</title>
        <authorList>
            <person name="Udwary D.W."/>
            <person name="Zeigler L."/>
            <person name="Asolkar R.N."/>
            <person name="Singan V."/>
            <person name="Lapidus A."/>
            <person name="Fenical W."/>
            <person name="Jensen P.R."/>
            <person name="Moore B.S."/>
        </authorList>
    </citation>
    <scope>NUCLEOTIDE SEQUENCE [LARGE SCALE GENOMIC DNA]</scope>
    <source>
        <strain>ATCC BAA-916 / DSM 44818 / JCM 13857 / NBRC 105044 / CNB-440</strain>
    </source>
</reference>
<name>KAD_SALTO</name>
<evidence type="ECO:0000255" key="1">
    <source>
        <dbReference type="HAMAP-Rule" id="MF_00235"/>
    </source>
</evidence>
<keyword id="KW-0067">ATP-binding</keyword>
<keyword id="KW-0963">Cytoplasm</keyword>
<keyword id="KW-0418">Kinase</keyword>
<keyword id="KW-0479">Metal-binding</keyword>
<keyword id="KW-0545">Nucleotide biosynthesis</keyword>
<keyword id="KW-0547">Nucleotide-binding</keyword>
<keyword id="KW-1185">Reference proteome</keyword>
<keyword id="KW-0808">Transferase</keyword>
<keyword id="KW-0862">Zinc</keyword>
<feature type="chain" id="PRO_1000078289" description="Adenylate kinase">
    <location>
        <begin position="1"/>
        <end position="217"/>
    </location>
</feature>
<feature type="region of interest" description="NMP" evidence="1">
    <location>
        <begin position="30"/>
        <end position="59"/>
    </location>
</feature>
<feature type="region of interest" description="LID" evidence="1">
    <location>
        <begin position="126"/>
        <end position="163"/>
    </location>
</feature>
<feature type="binding site" evidence="1">
    <location>
        <begin position="10"/>
        <end position="15"/>
    </location>
    <ligand>
        <name>ATP</name>
        <dbReference type="ChEBI" id="CHEBI:30616"/>
    </ligand>
</feature>
<feature type="binding site" evidence="1">
    <location>
        <position position="31"/>
    </location>
    <ligand>
        <name>AMP</name>
        <dbReference type="ChEBI" id="CHEBI:456215"/>
    </ligand>
</feature>
<feature type="binding site" evidence="1">
    <location>
        <position position="36"/>
    </location>
    <ligand>
        <name>AMP</name>
        <dbReference type="ChEBI" id="CHEBI:456215"/>
    </ligand>
</feature>
<feature type="binding site" evidence="1">
    <location>
        <begin position="57"/>
        <end position="59"/>
    </location>
    <ligand>
        <name>AMP</name>
        <dbReference type="ChEBI" id="CHEBI:456215"/>
    </ligand>
</feature>
<feature type="binding site" evidence="1">
    <location>
        <begin position="85"/>
        <end position="88"/>
    </location>
    <ligand>
        <name>AMP</name>
        <dbReference type="ChEBI" id="CHEBI:456215"/>
    </ligand>
</feature>
<feature type="binding site" evidence="1">
    <location>
        <position position="92"/>
    </location>
    <ligand>
        <name>AMP</name>
        <dbReference type="ChEBI" id="CHEBI:456215"/>
    </ligand>
</feature>
<feature type="binding site" evidence="1">
    <location>
        <position position="127"/>
    </location>
    <ligand>
        <name>ATP</name>
        <dbReference type="ChEBI" id="CHEBI:30616"/>
    </ligand>
</feature>
<feature type="binding site" evidence="1">
    <location>
        <position position="130"/>
    </location>
    <ligand>
        <name>Zn(2+)</name>
        <dbReference type="ChEBI" id="CHEBI:29105"/>
        <note>structural</note>
    </ligand>
</feature>
<feature type="binding site" evidence="1">
    <location>
        <position position="133"/>
    </location>
    <ligand>
        <name>Zn(2+)</name>
        <dbReference type="ChEBI" id="CHEBI:29105"/>
        <note>structural</note>
    </ligand>
</feature>
<feature type="binding site" evidence="1">
    <location>
        <position position="150"/>
    </location>
    <ligand>
        <name>Zn(2+)</name>
        <dbReference type="ChEBI" id="CHEBI:29105"/>
        <note>structural</note>
    </ligand>
</feature>
<feature type="binding site" evidence="1">
    <location>
        <position position="153"/>
    </location>
    <ligand>
        <name>Zn(2+)</name>
        <dbReference type="ChEBI" id="CHEBI:29105"/>
        <note>structural</note>
    </ligand>
</feature>
<feature type="binding site" evidence="1">
    <location>
        <position position="160"/>
    </location>
    <ligand>
        <name>AMP</name>
        <dbReference type="ChEBI" id="CHEBI:456215"/>
    </ligand>
</feature>
<feature type="binding site" evidence="1">
    <location>
        <position position="171"/>
    </location>
    <ligand>
        <name>AMP</name>
        <dbReference type="ChEBI" id="CHEBI:456215"/>
    </ligand>
</feature>
<feature type="binding site" evidence="1">
    <location>
        <position position="199"/>
    </location>
    <ligand>
        <name>ATP</name>
        <dbReference type="ChEBI" id="CHEBI:30616"/>
    </ligand>
</feature>
<sequence>MRLVLVGPPGAGKGTQAEFVAAHLAVPKISTGDIFRSNVSQGTPLGVQAKRYMDAGELVPDEVTINMVRDRLAEPDAGEGFLLDGFPRTTPQAAALDKLLVDLGTALDLVLELVVDDDEVIRRLSGRRTCRGCGKVWHVEFDAPSQEGRCDRCGAELFQRDDDKPETIATRLREYADKTAPLVDYYGAQSKLVGIDATGPVEDVTVRAIDALRSYSG</sequence>
<accession>A4XBM5</accession>
<organism>
    <name type="scientific">Salinispora tropica (strain ATCC BAA-916 / DSM 44818 / JCM 13857 / NBRC 105044 / CNB-440)</name>
    <dbReference type="NCBI Taxonomy" id="369723"/>
    <lineage>
        <taxon>Bacteria</taxon>
        <taxon>Bacillati</taxon>
        <taxon>Actinomycetota</taxon>
        <taxon>Actinomycetes</taxon>
        <taxon>Micromonosporales</taxon>
        <taxon>Micromonosporaceae</taxon>
        <taxon>Salinispora</taxon>
    </lineage>
</organism>
<comment type="function">
    <text evidence="1">Catalyzes the reversible transfer of the terminal phosphate group between ATP and AMP. Plays an important role in cellular energy homeostasis and in adenine nucleotide metabolism.</text>
</comment>
<comment type="catalytic activity">
    <reaction evidence="1">
        <text>AMP + ATP = 2 ADP</text>
        <dbReference type="Rhea" id="RHEA:12973"/>
        <dbReference type="ChEBI" id="CHEBI:30616"/>
        <dbReference type="ChEBI" id="CHEBI:456215"/>
        <dbReference type="ChEBI" id="CHEBI:456216"/>
        <dbReference type="EC" id="2.7.4.3"/>
    </reaction>
</comment>
<comment type="pathway">
    <text evidence="1">Purine metabolism; AMP biosynthesis via salvage pathway; AMP from ADP: step 1/1.</text>
</comment>
<comment type="subunit">
    <text evidence="1">Monomer.</text>
</comment>
<comment type="subcellular location">
    <subcellularLocation>
        <location evidence="1">Cytoplasm</location>
    </subcellularLocation>
</comment>
<comment type="domain">
    <text evidence="1">Consists of three domains, a large central CORE domain and two small peripheral domains, NMPbind and LID, which undergo movements during catalysis. The LID domain closes over the site of phosphoryl transfer upon ATP binding. Assembling and dissambling the active center during each catalytic cycle provides an effective means to prevent ATP hydrolysis. Some bacteria have evolved a zinc-coordinating structure that stabilizes the LID domain.</text>
</comment>
<comment type="similarity">
    <text evidence="1">Belongs to the adenylate kinase family.</text>
</comment>
<dbReference type="EC" id="2.7.4.3" evidence="1"/>
<dbReference type="EMBL" id="CP000667">
    <property type="protein sequence ID" value="ABP56332.1"/>
    <property type="molecule type" value="Genomic_DNA"/>
</dbReference>
<dbReference type="RefSeq" id="WP_012015107.1">
    <property type="nucleotide sequence ID" value="NC_009380.1"/>
</dbReference>
<dbReference type="SMR" id="A4XBM5"/>
<dbReference type="STRING" id="369723.Strop_3902"/>
<dbReference type="KEGG" id="stp:Strop_3902"/>
<dbReference type="PATRIC" id="fig|369723.5.peg.4027"/>
<dbReference type="eggNOG" id="COG0563">
    <property type="taxonomic scope" value="Bacteria"/>
</dbReference>
<dbReference type="HOGENOM" id="CLU_032354_1_2_11"/>
<dbReference type="UniPathway" id="UPA00588">
    <property type="reaction ID" value="UER00649"/>
</dbReference>
<dbReference type="Proteomes" id="UP000000235">
    <property type="component" value="Chromosome"/>
</dbReference>
<dbReference type="GO" id="GO:0005737">
    <property type="term" value="C:cytoplasm"/>
    <property type="evidence" value="ECO:0007669"/>
    <property type="project" value="UniProtKB-SubCell"/>
</dbReference>
<dbReference type="GO" id="GO:0004017">
    <property type="term" value="F:adenylate kinase activity"/>
    <property type="evidence" value="ECO:0007669"/>
    <property type="project" value="UniProtKB-UniRule"/>
</dbReference>
<dbReference type="GO" id="GO:0005524">
    <property type="term" value="F:ATP binding"/>
    <property type="evidence" value="ECO:0007669"/>
    <property type="project" value="UniProtKB-UniRule"/>
</dbReference>
<dbReference type="GO" id="GO:0008270">
    <property type="term" value="F:zinc ion binding"/>
    <property type="evidence" value="ECO:0007669"/>
    <property type="project" value="UniProtKB-UniRule"/>
</dbReference>
<dbReference type="GO" id="GO:0044209">
    <property type="term" value="P:AMP salvage"/>
    <property type="evidence" value="ECO:0007669"/>
    <property type="project" value="UniProtKB-UniRule"/>
</dbReference>
<dbReference type="CDD" id="cd01428">
    <property type="entry name" value="ADK"/>
    <property type="match status" value="1"/>
</dbReference>
<dbReference type="FunFam" id="3.40.50.300:FF:000106">
    <property type="entry name" value="Adenylate kinase mitochondrial"/>
    <property type="match status" value="1"/>
</dbReference>
<dbReference type="Gene3D" id="3.40.50.300">
    <property type="entry name" value="P-loop containing nucleotide triphosphate hydrolases"/>
    <property type="match status" value="1"/>
</dbReference>
<dbReference type="HAMAP" id="MF_00235">
    <property type="entry name" value="Adenylate_kinase_Adk"/>
    <property type="match status" value="1"/>
</dbReference>
<dbReference type="InterPro" id="IPR006259">
    <property type="entry name" value="Adenyl_kin_sub"/>
</dbReference>
<dbReference type="InterPro" id="IPR000850">
    <property type="entry name" value="Adenylat/UMP-CMP_kin"/>
</dbReference>
<dbReference type="InterPro" id="IPR033690">
    <property type="entry name" value="Adenylat_kinase_CS"/>
</dbReference>
<dbReference type="InterPro" id="IPR007862">
    <property type="entry name" value="Adenylate_kinase_lid-dom"/>
</dbReference>
<dbReference type="InterPro" id="IPR027417">
    <property type="entry name" value="P-loop_NTPase"/>
</dbReference>
<dbReference type="NCBIfam" id="TIGR01351">
    <property type="entry name" value="adk"/>
    <property type="match status" value="1"/>
</dbReference>
<dbReference type="NCBIfam" id="NF001380">
    <property type="entry name" value="PRK00279.1-2"/>
    <property type="match status" value="1"/>
</dbReference>
<dbReference type="NCBIfam" id="NF001381">
    <property type="entry name" value="PRK00279.1-3"/>
    <property type="match status" value="1"/>
</dbReference>
<dbReference type="NCBIfam" id="NF011100">
    <property type="entry name" value="PRK14527.1"/>
    <property type="match status" value="1"/>
</dbReference>
<dbReference type="PANTHER" id="PTHR23359">
    <property type="entry name" value="NUCLEOTIDE KINASE"/>
    <property type="match status" value="1"/>
</dbReference>
<dbReference type="Pfam" id="PF00406">
    <property type="entry name" value="ADK"/>
    <property type="match status" value="1"/>
</dbReference>
<dbReference type="Pfam" id="PF05191">
    <property type="entry name" value="ADK_lid"/>
    <property type="match status" value="1"/>
</dbReference>
<dbReference type="PRINTS" id="PR00094">
    <property type="entry name" value="ADENYLTKNASE"/>
</dbReference>
<dbReference type="SUPFAM" id="SSF52540">
    <property type="entry name" value="P-loop containing nucleoside triphosphate hydrolases"/>
    <property type="match status" value="1"/>
</dbReference>
<dbReference type="PROSITE" id="PS00113">
    <property type="entry name" value="ADENYLATE_KINASE"/>
    <property type="match status" value="1"/>
</dbReference>